<name>MTSH_DROME</name>
<accession>Q9VLP4</accession>
<feature type="chain" id="PRO_0000436180" description="Protein mitoshell" evidence="3">
    <location>
        <begin position="1"/>
        <end position="649"/>
    </location>
</feature>
<feature type="region of interest" description="Disordered" evidence="1">
    <location>
        <begin position="167"/>
        <end position="193"/>
    </location>
</feature>
<feature type="region of interest" description="Disordered" evidence="1">
    <location>
        <begin position="389"/>
        <end position="414"/>
    </location>
</feature>
<feature type="region of interest" description="Disordered" evidence="1">
    <location>
        <begin position="485"/>
        <end position="512"/>
    </location>
</feature>
<feature type="compositionally biased region" description="Basic and acidic residues" evidence="1">
    <location>
        <begin position="167"/>
        <end position="176"/>
    </location>
</feature>
<feature type="compositionally biased region" description="Low complexity" evidence="1">
    <location>
        <begin position="177"/>
        <end position="191"/>
    </location>
</feature>
<feature type="compositionally biased region" description="Polar residues" evidence="1">
    <location>
        <begin position="393"/>
        <end position="414"/>
    </location>
</feature>
<feature type="compositionally biased region" description="Polar residues" evidence="1">
    <location>
        <begin position="485"/>
        <end position="503"/>
    </location>
</feature>
<protein>
    <recommendedName>
        <fullName evidence="4">Protein mitoshell</fullName>
    </recommendedName>
</protein>
<dbReference type="EMBL" id="AE014134">
    <property type="protein sequence ID" value="AAF52640.2"/>
    <property type="molecule type" value="Genomic_DNA"/>
</dbReference>
<dbReference type="RefSeq" id="NP_609208.2">
    <property type="nucleotide sequence ID" value="NM_135364.3"/>
</dbReference>
<dbReference type="SMR" id="Q9VLP4"/>
<dbReference type="IntAct" id="Q9VLP4">
    <property type="interactions" value="2"/>
</dbReference>
<dbReference type="STRING" id="7227.FBpp0290393"/>
<dbReference type="PaxDb" id="7227-FBpp0290393"/>
<dbReference type="DNASU" id="34141"/>
<dbReference type="EnsemblMetazoa" id="FBtr0301170">
    <property type="protein sequence ID" value="FBpp0290393"/>
    <property type="gene ID" value="FBgn0262598"/>
</dbReference>
<dbReference type="GeneID" id="34141"/>
<dbReference type="KEGG" id="dme:Dmel_CG7795"/>
<dbReference type="UCSC" id="CG7795-RA">
    <property type="organism name" value="d. melanogaster"/>
</dbReference>
<dbReference type="AGR" id="FB:FBgn0262598"/>
<dbReference type="CTD" id="34141"/>
<dbReference type="FlyBase" id="FBgn0262598">
    <property type="gene designation" value="mtsh"/>
</dbReference>
<dbReference type="VEuPathDB" id="VectorBase:FBgn0262598"/>
<dbReference type="eggNOG" id="ENOG502SCTB">
    <property type="taxonomic scope" value="Eukaryota"/>
</dbReference>
<dbReference type="HOGENOM" id="CLU_374803_0_0_1"/>
<dbReference type="InParanoid" id="Q9VLP4"/>
<dbReference type="OMA" id="DHIMGRP"/>
<dbReference type="OrthoDB" id="1742084at2759"/>
<dbReference type="PhylomeDB" id="Q9VLP4"/>
<dbReference type="BioGRID-ORCS" id="34141">
    <property type="hits" value="0 hits in 1 CRISPR screen"/>
</dbReference>
<dbReference type="GenomeRNAi" id="34141"/>
<dbReference type="PRO" id="PR:Q9VLP4"/>
<dbReference type="Proteomes" id="UP000000803">
    <property type="component" value="Chromosome 2L"/>
</dbReference>
<dbReference type="Bgee" id="FBgn0262598">
    <property type="expression patterns" value="Expressed in spermatocyte in testis and 18 other cell types or tissues"/>
</dbReference>
<dbReference type="ExpressionAtlas" id="Q9VLP4">
    <property type="expression patterns" value="baseline and differential"/>
</dbReference>
<dbReference type="GO" id="GO:0030154">
    <property type="term" value="P:cell differentiation"/>
    <property type="evidence" value="ECO:0007669"/>
    <property type="project" value="UniProtKB-KW"/>
</dbReference>
<dbReference type="GO" id="GO:0051301">
    <property type="term" value="P:cell division"/>
    <property type="evidence" value="ECO:0007669"/>
    <property type="project" value="UniProtKB-KW"/>
</dbReference>
<dbReference type="GO" id="GO:0051321">
    <property type="term" value="P:meiotic cell cycle"/>
    <property type="evidence" value="ECO:0007669"/>
    <property type="project" value="UniProtKB-KW"/>
</dbReference>
<dbReference type="GO" id="GO:0007283">
    <property type="term" value="P:spermatogenesis"/>
    <property type="evidence" value="ECO:0000315"/>
    <property type="project" value="FlyBase"/>
</dbReference>
<comment type="function">
    <text evidence="2">Required for male meiotic cytokinesis through its involvement in the regulation of mitochondrial aggregation and fusion, astral spindle assembly and contractile ring formation.</text>
</comment>
<comment type="disruption phenotype">
    <text evidence="2">Mutants are viable and females are fully fertile. Males show premature mitochondrial aggregation and fusion in spermatocytes and spermatids, leading to an aberrant mitochondrial shell around premeiotic nuclei. Improper mitochondrial localization occurs in the testis associated with defective central astral spindles and a lack of contractile rings which leads to meiotic cytokinesis failure.</text>
</comment>
<gene>
    <name evidence="4" type="primary">mtsh</name>
    <name evidence="4" type="ORF">CG7795</name>
</gene>
<organism evidence="5">
    <name type="scientific">Drosophila melanogaster</name>
    <name type="common">Fruit fly</name>
    <dbReference type="NCBI Taxonomy" id="7227"/>
    <lineage>
        <taxon>Eukaryota</taxon>
        <taxon>Metazoa</taxon>
        <taxon>Ecdysozoa</taxon>
        <taxon>Arthropoda</taxon>
        <taxon>Hexapoda</taxon>
        <taxon>Insecta</taxon>
        <taxon>Pterygota</taxon>
        <taxon>Neoptera</taxon>
        <taxon>Endopterygota</taxon>
        <taxon>Diptera</taxon>
        <taxon>Brachycera</taxon>
        <taxon>Muscomorpha</taxon>
        <taxon>Ephydroidea</taxon>
        <taxon>Drosophilidae</taxon>
        <taxon>Drosophila</taxon>
        <taxon>Sophophora</taxon>
    </lineage>
</organism>
<evidence type="ECO:0000256" key="1">
    <source>
        <dbReference type="SAM" id="MobiDB-lite"/>
    </source>
</evidence>
<evidence type="ECO:0000269" key="2">
    <source>
    </source>
</evidence>
<evidence type="ECO:0000305" key="3"/>
<evidence type="ECO:0000312" key="4">
    <source>
        <dbReference type="FlyBase" id="FBgn0262598"/>
    </source>
</evidence>
<evidence type="ECO:0000312" key="5">
    <source>
        <dbReference type="Proteomes" id="UP000000803"/>
    </source>
</evidence>
<keyword id="KW-0131">Cell cycle</keyword>
<keyword id="KW-0132">Cell division</keyword>
<keyword id="KW-0221">Differentiation</keyword>
<keyword id="KW-0469">Meiosis</keyword>
<keyword id="KW-1185">Reference proteome</keyword>
<keyword id="KW-0744">Spermatogenesis</keyword>
<sequence>MNIPIYQVPSVTMQSLHQQSLYQQTYLDRNRMVTDVFVQEHVSQSSWSMAGSSAVFIPGPIITGSAHGHCHHTATVSTVSPQLATFMPFPGMQYYAASSATMNAYGHNQMYSTRASASVGFYLPQYHASCSHEQPKKTFCAAQTQTQQTAKTSCDVGTQVDLDAEELRSEARKPRPESVVPEESSISSLESGAGDGFRVQKKLRNSEVKLLDQRLHDITRVSLHGSEIAERLANAHRNRPCFKKIDTLCARLKQDLLRPDGVLPNINSQGIAWAVKDFIFVFTRIVNAWVILKGYVYNTPDALNKIKDELPSGFMASFDSWQISTLSIVKMIVKSFVNLDELLQKQKNSFSGKDGAPINQSNSISLRSFIDSNDSSGLAQKYLGMTTGHGPSAFSTPNNQIRNNAASKGQEPTSSALYKPKCALNLNYLYTMIEDSEETQRHVDANGTYLKTGTYQPLQKESMQLEMPPAKPNDHYVERNANQQALPSQEIPNAPTPKSSPQSDRPRDVRSYTNPFSAIGKEVTRQLYEFSDRVMELKNLERFFKKQFTRNYYPNFYQHCQDDFIDVRAIILRCENSSYHHIYQAIHDLRRIIFTVRCYLQMYTDENLLYYIDLYERSVNDMLSKPPHYPNQFDHIMGRPGEKLFNYEI</sequence>
<proteinExistence type="predicted"/>
<reference evidence="5" key="1">
    <citation type="journal article" date="2000" name="Science">
        <title>The genome sequence of Drosophila melanogaster.</title>
        <authorList>
            <person name="Adams M.D."/>
            <person name="Celniker S.E."/>
            <person name="Holt R.A."/>
            <person name="Evans C.A."/>
            <person name="Gocayne J.D."/>
            <person name="Amanatides P.G."/>
            <person name="Scherer S.E."/>
            <person name="Li P.W."/>
            <person name="Hoskins R.A."/>
            <person name="Galle R.F."/>
            <person name="George R.A."/>
            <person name="Lewis S.E."/>
            <person name="Richards S."/>
            <person name="Ashburner M."/>
            <person name="Henderson S.N."/>
            <person name="Sutton G.G."/>
            <person name="Wortman J.R."/>
            <person name="Yandell M.D."/>
            <person name="Zhang Q."/>
            <person name="Chen L.X."/>
            <person name="Brandon R.C."/>
            <person name="Rogers Y.-H.C."/>
            <person name="Blazej R.G."/>
            <person name="Champe M."/>
            <person name="Pfeiffer B.D."/>
            <person name="Wan K.H."/>
            <person name="Doyle C."/>
            <person name="Baxter E.G."/>
            <person name="Helt G."/>
            <person name="Nelson C.R."/>
            <person name="Miklos G.L.G."/>
            <person name="Abril J.F."/>
            <person name="Agbayani A."/>
            <person name="An H.-J."/>
            <person name="Andrews-Pfannkoch C."/>
            <person name="Baldwin D."/>
            <person name="Ballew R.M."/>
            <person name="Basu A."/>
            <person name="Baxendale J."/>
            <person name="Bayraktaroglu L."/>
            <person name="Beasley E.M."/>
            <person name="Beeson K.Y."/>
            <person name="Benos P.V."/>
            <person name="Berman B.P."/>
            <person name="Bhandari D."/>
            <person name="Bolshakov S."/>
            <person name="Borkova D."/>
            <person name="Botchan M.R."/>
            <person name="Bouck J."/>
            <person name="Brokstein P."/>
            <person name="Brottier P."/>
            <person name="Burtis K.C."/>
            <person name="Busam D.A."/>
            <person name="Butler H."/>
            <person name="Cadieu E."/>
            <person name="Center A."/>
            <person name="Chandra I."/>
            <person name="Cherry J.M."/>
            <person name="Cawley S."/>
            <person name="Dahlke C."/>
            <person name="Davenport L.B."/>
            <person name="Davies P."/>
            <person name="de Pablos B."/>
            <person name="Delcher A."/>
            <person name="Deng Z."/>
            <person name="Mays A.D."/>
            <person name="Dew I."/>
            <person name="Dietz S.M."/>
            <person name="Dodson K."/>
            <person name="Doup L.E."/>
            <person name="Downes M."/>
            <person name="Dugan-Rocha S."/>
            <person name="Dunkov B.C."/>
            <person name="Dunn P."/>
            <person name="Durbin K.J."/>
            <person name="Evangelista C.C."/>
            <person name="Ferraz C."/>
            <person name="Ferriera S."/>
            <person name="Fleischmann W."/>
            <person name="Fosler C."/>
            <person name="Gabrielian A.E."/>
            <person name="Garg N.S."/>
            <person name="Gelbart W.M."/>
            <person name="Glasser K."/>
            <person name="Glodek A."/>
            <person name="Gong F."/>
            <person name="Gorrell J.H."/>
            <person name="Gu Z."/>
            <person name="Guan P."/>
            <person name="Harris M."/>
            <person name="Harris N.L."/>
            <person name="Harvey D.A."/>
            <person name="Heiman T.J."/>
            <person name="Hernandez J.R."/>
            <person name="Houck J."/>
            <person name="Hostin D."/>
            <person name="Houston K.A."/>
            <person name="Howland T.J."/>
            <person name="Wei M.-H."/>
            <person name="Ibegwam C."/>
            <person name="Jalali M."/>
            <person name="Kalush F."/>
            <person name="Karpen G.H."/>
            <person name="Ke Z."/>
            <person name="Kennison J.A."/>
            <person name="Ketchum K.A."/>
            <person name="Kimmel B.E."/>
            <person name="Kodira C.D."/>
            <person name="Kraft C.L."/>
            <person name="Kravitz S."/>
            <person name="Kulp D."/>
            <person name="Lai Z."/>
            <person name="Lasko P."/>
            <person name="Lei Y."/>
            <person name="Levitsky A.A."/>
            <person name="Li J.H."/>
            <person name="Li Z."/>
            <person name="Liang Y."/>
            <person name="Lin X."/>
            <person name="Liu X."/>
            <person name="Mattei B."/>
            <person name="McIntosh T.C."/>
            <person name="McLeod M.P."/>
            <person name="McPherson D."/>
            <person name="Merkulov G."/>
            <person name="Milshina N.V."/>
            <person name="Mobarry C."/>
            <person name="Morris J."/>
            <person name="Moshrefi A."/>
            <person name="Mount S.M."/>
            <person name="Moy M."/>
            <person name="Murphy B."/>
            <person name="Murphy L."/>
            <person name="Muzny D.M."/>
            <person name="Nelson D.L."/>
            <person name="Nelson D.R."/>
            <person name="Nelson K.A."/>
            <person name="Nixon K."/>
            <person name="Nusskern D.R."/>
            <person name="Pacleb J.M."/>
            <person name="Palazzolo M."/>
            <person name="Pittman G.S."/>
            <person name="Pan S."/>
            <person name="Pollard J."/>
            <person name="Puri V."/>
            <person name="Reese M.G."/>
            <person name="Reinert K."/>
            <person name="Remington K."/>
            <person name="Saunders R.D.C."/>
            <person name="Scheeler F."/>
            <person name="Shen H."/>
            <person name="Shue B.C."/>
            <person name="Siden-Kiamos I."/>
            <person name="Simpson M."/>
            <person name="Skupski M.P."/>
            <person name="Smith T.J."/>
            <person name="Spier E."/>
            <person name="Spradling A.C."/>
            <person name="Stapleton M."/>
            <person name="Strong R."/>
            <person name="Sun E."/>
            <person name="Svirskas R."/>
            <person name="Tector C."/>
            <person name="Turner R."/>
            <person name="Venter E."/>
            <person name="Wang A.H."/>
            <person name="Wang X."/>
            <person name="Wang Z.-Y."/>
            <person name="Wassarman D.A."/>
            <person name="Weinstock G.M."/>
            <person name="Weissenbach J."/>
            <person name="Williams S.M."/>
            <person name="Woodage T."/>
            <person name="Worley K.C."/>
            <person name="Wu D."/>
            <person name="Yang S."/>
            <person name="Yao Q.A."/>
            <person name="Ye J."/>
            <person name="Yeh R.-F."/>
            <person name="Zaveri J.S."/>
            <person name="Zhan M."/>
            <person name="Zhang G."/>
            <person name="Zhao Q."/>
            <person name="Zheng L."/>
            <person name="Zheng X.H."/>
            <person name="Zhong F.N."/>
            <person name="Zhong W."/>
            <person name="Zhou X."/>
            <person name="Zhu S.C."/>
            <person name="Zhu X."/>
            <person name="Smith H.O."/>
            <person name="Gibbs R.A."/>
            <person name="Myers E.W."/>
            <person name="Rubin G.M."/>
            <person name="Venter J.C."/>
        </authorList>
    </citation>
    <scope>NUCLEOTIDE SEQUENCE [LARGE SCALE GENOMIC DNA]</scope>
    <source>
        <strain evidence="5">Berkeley</strain>
    </source>
</reference>
<reference evidence="5" key="2">
    <citation type="journal article" date="2002" name="Genome Biol.">
        <title>Annotation of the Drosophila melanogaster euchromatic genome: a systematic review.</title>
        <authorList>
            <person name="Misra S."/>
            <person name="Crosby M.A."/>
            <person name="Mungall C.J."/>
            <person name="Matthews B.B."/>
            <person name="Campbell K.S."/>
            <person name="Hradecky P."/>
            <person name="Huang Y."/>
            <person name="Kaminker J.S."/>
            <person name="Millburn G.H."/>
            <person name="Prochnik S.E."/>
            <person name="Smith C.D."/>
            <person name="Tupy J.L."/>
            <person name="Whitfield E.J."/>
            <person name="Bayraktaroglu L."/>
            <person name="Berman B.P."/>
            <person name="Bettencourt B.R."/>
            <person name="Celniker S.E."/>
            <person name="de Grey A.D.N.J."/>
            <person name="Drysdale R.A."/>
            <person name="Harris N.L."/>
            <person name="Richter J."/>
            <person name="Russo S."/>
            <person name="Schroeder A.J."/>
            <person name="Shu S.Q."/>
            <person name="Stapleton M."/>
            <person name="Yamada C."/>
            <person name="Ashburner M."/>
            <person name="Gelbart W.M."/>
            <person name="Rubin G.M."/>
            <person name="Lewis S.E."/>
        </authorList>
    </citation>
    <scope>GENOME REANNOTATION</scope>
    <source>
        <strain evidence="5">Berkeley</strain>
    </source>
</reference>
<reference evidence="3" key="3">
    <citation type="journal article" date="2010" name="DNA Cell Biol.">
        <title>A novel predicted bromodomain-related protein affects coordination between meiosis and spermiogenesis in Drosophila and is required for male meiotic cytokinesis.</title>
        <authorList>
            <person name="Bergner L.M."/>
            <person name="Hickman F.E."/>
            <person name="Wood K.H."/>
            <person name="Wakeman C.M."/>
            <person name="Stone H.H."/>
            <person name="Campbell T.J."/>
            <person name="Lightcap S.B."/>
            <person name="Favors S.M."/>
            <person name="Aldridge A.C."/>
            <person name="Hales K.G."/>
        </authorList>
    </citation>
    <scope>FUNCTION</scope>
    <scope>DISRUPTION PHENOTYPE</scope>
</reference>